<gene>
    <name evidence="1 6" type="primary">xseA</name>
    <name type="ordered locus">b2509</name>
    <name type="ordered locus">JW2493</name>
</gene>
<sequence>MLPSQSPAIFTVSRLNQTVRLLLEHEMGQVWISGEISNFTQPASGHWYFTLKDDTAQVRCAMFRNSNRRVTFRPQHGQQVLVRANITLYEPRGDYQIIVESMQPAGEGLLQQKYEQLKAKLQAEGLFDQQYKKPLPSPAHCVGVITSKTGAALHDILHVLKRRDPSLPVIIYPAAVQGDDAPGQIVRAIELANQRNECDVLIVGRGGGSLEDLWSFNDERVARAIFTSRIPVVSAVGHETDVTIADFVADLRAPTPSAAAEVVSRNQQELLRQVQSTRQRLEMAMDYYLANRTRRFTQIHHRLQQQHPQLRLARQQTMLERLQKRMSFALENQLKRTGQQQQRLTQRLNQQNPQPKIHRAQTRIQQLEYRLAETLRAQLSATRERFGNAVTHLEAVSPLSTLARGYSVTTATDGNVLKKVKQVKAGEMLTTRLEDGWIESEVKNIQPVKKSRKKVH</sequence>
<organism>
    <name type="scientific">Escherichia coli (strain K12)</name>
    <dbReference type="NCBI Taxonomy" id="83333"/>
    <lineage>
        <taxon>Bacteria</taxon>
        <taxon>Pseudomonadati</taxon>
        <taxon>Pseudomonadota</taxon>
        <taxon>Gammaproteobacteria</taxon>
        <taxon>Enterobacterales</taxon>
        <taxon>Enterobacteriaceae</taxon>
        <taxon>Escherichia</taxon>
    </lineage>
</organism>
<accession>P04994</accession>
<accession>P78230</accession>
<feature type="chain" id="PRO_0000197845" description="Exodeoxyribonuclease 7 large subunit">
    <location>
        <begin position="1"/>
        <end position="456"/>
    </location>
</feature>
<feature type="region of interest" description="Binds ssDNA, also required to bind the small subunit" evidence="2">
    <location>
        <begin position="1"/>
        <end position="103"/>
    </location>
</feature>
<feature type="mutagenesis site" description="About 10% ssDNA-binding by N-terminal domain." evidence="2">
    <original>F</original>
    <variation>A</variation>
    <location>
        <position position="63"/>
    </location>
</feature>
<feature type="mutagenesis site" description="About 20% ssDNA-binding by N-terminal domain." evidence="2">
    <original>RNSNRR</original>
    <variation>ENSNEE</variation>
    <location>
        <begin position="64"/>
        <end position="69"/>
    </location>
</feature>
<feature type="mutagenesis site" description="About 50% ssDNA-binding by N-terminal domain." evidence="2">
    <original>Q</original>
    <variation>A</variation>
    <location>
        <position position="96"/>
    </location>
</feature>
<feature type="mutagenesis site" description="Loss of exonuclease activity, reduced ssDNA-binding." evidence="2">
    <original>D</original>
    <variation>A</variation>
    <location>
        <position position="155"/>
    </location>
</feature>
<feature type="mutagenesis site" description="Does not cleave Ec83 msDNA, not lethal on overexpression." evidence="3">
    <original>D</original>
    <variation>N</variation>
    <location>
        <position position="155"/>
    </location>
</feature>
<feature type="mutagenesis site" description="Wild-type exonuclease activity." evidence="2">
    <original>Q</original>
    <variation>A</variation>
    <location>
        <position position="177"/>
    </location>
</feature>
<feature type="mutagenesis site" description="Cleaves EC83 msDNA normally, reduced toxicity on overexpression." evidence="3">
    <original>A</original>
    <variation>T</variation>
    <location>
        <position position="188"/>
    </location>
</feature>
<feature type="mutagenesis site" description="Loss of exonuclease activity, still binds ssDNA." evidence="2">
    <original>R</original>
    <variation>A</variation>
    <location>
        <position position="205"/>
    </location>
</feature>
<feature type="mutagenesis site" description="Does not cleave Ec83 msDNA, 10-fold reduced toxicity on overexpression." evidence="3">
    <original>G</original>
    <variation>R</variation>
    <location>
        <position position="237"/>
    </location>
</feature>
<feature type="mutagenesis site" description="Loss of exonuclease activity, still binds ssDNA." evidence="2">
    <original>H</original>
    <variation>A</variation>
    <location>
        <position position="238"/>
    </location>
</feature>
<feature type="mutagenesis site" description="Loss of exonuclease activity, still binds ssDNA." evidence="2">
    <original>D</original>
    <variation>A</variation>
    <location>
        <position position="241"/>
    </location>
</feature>
<feature type="mutagenesis site" description="Wild-type exonuclease activity." evidence="2">
    <original>D</original>
    <variation>A</variation>
    <location>
        <position position="246"/>
    </location>
</feature>
<feature type="mutagenesis site" description="Wild-type exonuclease activity." evidence="2">
    <original>D</original>
    <variation>A</variation>
    <location>
        <position position="250"/>
    </location>
</feature>
<feature type="mutagenesis site" description="Wild-type exonuclease activity." evidence="2">
    <original>T</original>
    <variation>A</variation>
    <location>
        <position position="255"/>
    </location>
</feature>
<feature type="mutagenesis site" description="Loss of exonuclease activity." evidence="2">
    <location>
        <begin position="397"/>
        <end position="456"/>
    </location>
</feature>
<feature type="sequence conflict" description="In Ref. 1; AAA24766." evidence="8" ref="1">
    <original>N</original>
    <variation>S</variation>
    <location>
        <position position="67"/>
    </location>
</feature>
<keyword id="KW-0002">3D-structure</keyword>
<keyword id="KW-0963">Cytoplasm</keyword>
<keyword id="KW-0903">Direct protein sequencing</keyword>
<keyword id="KW-0238">DNA-binding</keyword>
<keyword id="KW-0269">Exonuclease</keyword>
<keyword id="KW-0378">Hydrolase</keyword>
<keyword id="KW-0540">Nuclease</keyword>
<keyword id="KW-1185">Reference proteome</keyword>
<comment type="function">
    <text evidence="2 3 4 5 10">Bidirectionally degrades single-stranded DNA into large acid-insoluble oligonucleotides, which are then degraded further into small acid-soluble oligonucleotides. It can degrade 3' or 5' ss regions extending from the termini of duplex DNA molecules and displaced ss regions. It can also excise thymine dimers in vitro (Probable) (PubMed:22718974, PubMed:4602029, PubMed:4602030). ssDNA-binding requires both subunits (PubMed:22718974). Required for production of the mature 5'-end of retron Ec78 or Ec83 msDNA. Overproduction of this subunit in the absence of an equivalent quantity of the small subunit is toxic, causing cell elongation and chromosome fragmentation or loss; its toxicity is mostly suppressed by RecA (PubMed:26626352).</text>
</comment>
<comment type="catalytic activity">
    <reaction evidence="1 2 4 5">
        <text>Exonucleolytic cleavage in either 5'- to 3'- or 3'- to 5'-direction to yield nucleoside 5'-phosphates.</text>
        <dbReference type="EC" id="3.1.11.6"/>
    </reaction>
</comment>
<comment type="cofactor">
    <text evidence="4">Does not require a metal cofactor.</text>
</comment>
<comment type="biophysicochemical properties">
    <phDependence>
        <text evidence="4">Optimum pH is 7.8 to 7.9.</text>
    </phDependence>
</comment>
<comment type="subunit">
    <text evidence="9 10">Heterooligomer composed of two different subunits with an approximate ratio of 4:1 for small to large subunit (Probable). Also estimated to have a 6:1 ration for small to large subunits (Probable).</text>
</comment>
<comment type="interaction">
    <interactant intactId="EBI-559703">
        <id>P04994</id>
    </interactant>
    <interactant intactId="EBI-559711">
        <id>P76168</id>
        <label>intQ</label>
    </interactant>
    <organismsDiffer>false</organismsDiffer>
    <experiments>3</experiments>
</comment>
<comment type="subcellular location">
    <subcellularLocation>
        <location evidence="10">Cytoplasm</location>
    </subcellularLocation>
</comment>
<comment type="domain">
    <text evidence="2 3">Predicted to have 4 domains. The N-terminus (about residues 1-103) binds ssDNA and is required to bind the small subunit; it probably has an OB-fold. The predicted catalytic domain is residues 104-266. Three alpha-helices are predicted in the C-terminal region (residues 267-301, 307-349 and 353-393), their removal singly or in pairs reduces small subunit-binding; none of the deletions have exonuclease activity. The extreme C-terminus (394-456) is required for exonuclease activity (PubMed:22718974). The N-terminus (residues 1-257) at low levels does not confer processing of msDNA and at higher levels is lethal. Lethality of this fragment is not counteracted by the small subunit (PubMed:26626352).</text>
</comment>
<comment type="disruption phenotype">
    <text evidence="3">No longer processes msDNA correctly (when retron Ec78 or Ec83 are expressed in the strain).</text>
</comment>
<comment type="similarity">
    <text evidence="1">Belongs to the XseA family.</text>
</comment>
<reference key="1">
    <citation type="journal article" date="1986" name="J. Biol. Chem.">
        <title>Escherichia coli exonuclease VII. Cloning and sequencing of the gene encoding the large subunit (xseA).</title>
        <authorList>
            <person name="Chase J.W."/>
            <person name="Rabin B.A."/>
            <person name="Murphy J.B."/>
            <person name="Stone K.L."/>
            <person name="Williams K.R."/>
        </authorList>
    </citation>
    <scope>NUCLEOTIDE SEQUENCE [GENOMIC DNA]</scope>
    <scope>PROTEIN SEQUENCE OF 1-12; 21-34; 70-82; 224-242; 303-311; 371-375; 386-399 AND 425-431</scope>
    <source>
        <strain>K12</strain>
    </source>
</reference>
<reference key="2">
    <citation type="journal article" date="1997" name="DNA Res.">
        <title>Construction of a contiguous 874-kb sequence of the Escherichia coli-K12 genome corresponding to 50.0-68.8 min on the linkage map and analysis of its sequence features.</title>
        <authorList>
            <person name="Yamamoto Y."/>
            <person name="Aiba H."/>
            <person name="Baba T."/>
            <person name="Hayashi K."/>
            <person name="Inada T."/>
            <person name="Isono K."/>
            <person name="Itoh T."/>
            <person name="Kimura S."/>
            <person name="Kitagawa M."/>
            <person name="Makino K."/>
            <person name="Miki T."/>
            <person name="Mitsuhashi N."/>
            <person name="Mizobuchi K."/>
            <person name="Mori H."/>
            <person name="Nakade S."/>
            <person name="Nakamura Y."/>
            <person name="Nashimoto H."/>
            <person name="Oshima T."/>
            <person name="Oyama S."/>
            <person name="Saito N."/>
            <person name="Sampei G."/>
            <person name="Satoh Y."/>
            <person name="Sivasundaram S."/>
            <person name="Tagami H."/>
            <person name="Takahashi H."/>
            <person name="Takeda J."/>
            <person name="Takemoto K."/>
            <person name="Uehara K."/>
            <person name="Wada C."/>
            <person name="Yamagata S."/>
            <person name="Horiuchi T."/>
        </authorList>
    </citation>
    <scope>NUCLEOTIDE SEQUENCE [LARGE SCALE GENOMIC DNA]</scope>
    <source>
        <strain>K12 / W3110 / ATCC 27325 / DSM 5911</strain>
    </source>
</reference>
<reference key="3">
    <citation type="journal article" date="1997" name="Science">
        <title>The complete genome sequence of Escherichia coli K-12.</title>
        <authorList>
            <person name="Blattner F.R."/>
            <person name="Plunkett G. III"/>
            <person name="Bloch C.A."/>
            <person name="Perna N.T."/>
            <person name="Burland V."/>
            <person name="Riley M."/>
            <person name="Collado-Vides J."/>
            <person name="Glasner J.D."/>
            <person name="Rode C.K."/>
            <person name="Mayhew G.F."/>
            <person name="Gregor J."/>
            <person name="Davis N.W."/>
            <person name="Kirkpatrick H.A."/>
            <person name="Goeden M.A."/>
            <person name="Rose D.J."/>
            <person name="Mau B."/>
            <person name="Shao Y."/>
        </authorList>
    </citation>
    <scope>NUCLEOTIDE SEQUENCE [LARGE SCALE GENOMIC DNA]</scope>
    <source>
        <strain>K12 / MG1655 / ATCC 47076</strain>
    </source>
</reference>
<reference key="4">
    <citation type="journal article" date="2006" name="Mol. Syst. Biol.">
        <title>Highly accurate genome sequences of Escherichia coli K-12 strains MG1655 and W3110.</title>
        <authorList>
            <person name="Hayashi K."/>
            <person name="Morooka N."/>
            <person name="Yamamoto Y."/>
            <person name="Fujita K."/>
            <person name="Isono K."/>
            <person name="Choi S."/>
            <person name="Ohtsubo E."/>
            <person name="Baba T."/>
            <person name="Wanner B.L."/>
            <person name="Mori H."/>
            <person name="Horiuchi T."/>
        </authorList>
    </citation>
    <scope>NUCLEOTIDE SEQUENCE [LARGE SCALE GENOMIC DNA]</scope>
    <source>
        <strain>K12 / W3110 / ATCC 27325 / DSM 5911</strain>
    </source>
</reference>
<reference key="5">
    <citation type="journal article" date="1974" name="J. Biol. Chem.">
        <title>Exonuclease VII of Escherichia coli. Purification and properties.</title>
        <authorList>
            <person name="Chase J.W."/>
            <person name="Richardson C.C."/>
        </authorList>
    </citation>
    <scope>CATALYTIC ACTIVITY</scope>
    <scope>NO COFACTOR</scope>
    <scope>BIOPHYSICOCHEMICAL PROPERTIES</scope>
    <source>
        <strain>K12</strain>
    </source>
</reference>
<reference key="6">
    <citation type="journal article" date="1974" name="J. Biol. Chem.">
        <title>Exonuclease VII of Escherichia coli. Mechanism of action.</title>
        <authorList>
            <person name="Chase J.W."/>
            <person name="Richardson C.C."/>
        </authorList>
    </citation>
    <scope>CATALYTIC ACTIVITY</scope>
    <source>
        <strain>K12</strain>
    </source>
</reference>
<reference key="7">
    <citation type="journal article" date="1982" name="J. Biol. Chem.">
        <title>Subunit structure of Escherichia coli exonuclease VII.</title>
        <authorList>
            <person name="Vales L.D."/>
            <person name="Rabin B.A."/>
            <person name="Chase J.W."/>
        </authorList>
    </citation>
    <scope>FUNCTION</scope>
    <scope>SUBUNIT</scope>
    <scope>SUBCELLULAR LOCATION</scope>
    <source>
        <strain>K12</strain>
    </source>
</reference>
<reference key="8">
    <citation type="journal article" date="2012" name="Nucleic Acids Res.">
        <title>Delineation of structural domains and identification of functionally important residues in DNA repair enzyme exonuclease VII.</title>
        <authorList>
            <person name="Poleszak K."/>
            <person name="Kaminska K.H."/>
            <person name="Dunin-Horkawicz S."/>
            <person name="Lupas A."/>
            <person name="Skowronek K.J."/>
            <person name="Bujnicki J.M."/>
        </authorList>
    </citation>
    <scope>FUNCTION</scope>
    <scope>CATALYTIC ACTIVITY</scope>
    <scope>SUBUNIT</scope>
    <scope>DOMAIN</scope>
    <scope>SSDNA-BINDING</scope>
    <scope>MUTAGENESIS OF PHE-63; 64-ARG--ARG-69; GLN-96; ASP-155; GLN-177; ARG-205; HIS-238; ASP-241; ASP-246; ASP-250; THR-255 AND 397-SER--HIS-456</scope>
</reference>
<reference key="9">
    <citation type="journal article" date="2015" name="J. Microbiol.">
        <title>Characterization of cell death in Escherichia coli mediated by XseA, a large subunit of exonuclease VII.</title>
        <authorList>
            <person name="Jung H."/>
            <person name="Liang J."/>
            <person name="Jung Y."/>
            <person name="Lim D."/>
        </authorList>
    </citation>
    <scope>FUNCTION IN MSDNA PROCESSING</scope>
    <scope>DOMAIN</scope>
    <scope>DISRUPTION PHENOTYPE</scope>
    <scope>MUTAGENESIS OF ASP-155; ALA-188 AND GLY-237</scope>
    <source>
        <strain>K12 / BW25113</strain>
    </source>
</reference>
<protein>
    <recommendedName>
        <fullName evidence="1">Exodeoxyribonuclease 7 large subunit</fullName>
        <ecNumber evidence="1 4 5">3.1.11.6</ecNumber>
    </recommendedName>
    <alternativeName>
        <fullName evidence="1 7">Exodeoxyribonuclease VII large subunit</fullName>
        <shortName>ExoVII large subunit</shortName>
        <shortName evidence="1 6">Exonuclease VII large subunit</shortName>
    </alternativeName>
</protein>
<evidence type="ECO:0000255" key="1">
    <source>
        <dbReference type="HAMAP-Rule" id="MF_00378"/>
    </source>
</evidence>
<evidence type="ECO:0000269" key="2">
    <source>
    </source>
</evidence>
<evidence type="ECO:0000269" key="3">
    <source>
    </source>
</evidence>
<evidence type="ECO:0000269" key="4">
    <source>
    </source>
</evidence>
<evidence type="ECO:0000269" key="5">
    <source>
    </source>
</evidence>
<evidence type="ECO:0000303" key="6">
    <source>
    </source>
</evidence>
<evidence type="ECO:0000303" key="7">
    <source>
    </source>
</evidence>
<evidence type="ECO:0000305" key="8"/>
<evidence type="ECO:0000305" key="9">
    <source>
    </source>
</evidence>
<evidence type="ECO:0000305" key="10">
    <source>
    </source>
</evidence>
<name>EX7L_ECOLI</name>
<dbReference type="EC" id="3.1.11.6" evidence="1 4 5"/>
<dbReference type="EMBL" id="J02599">
    <property type="protein sequence ID" value="AAA24766.1"/>
    <property type="molecule type" value="Genomic_DNA"/>
</dbReference>
<dbReference type="EMBL" id="U00096">
    <property type="protein sequence ID" value="AAC75562.1"/>
    <property type="molecule type" value="Genomic_DNA"/>
</dbReference>
<dbReference type="EMBL" id="AP009048">
    <property type="protein sequence ID" value="BAA16396.1"/>
    <property type="molecule type" value="Genomic_DNA"/>
</dbReference>
<dbReference type="PIR" id="D65027">
    <property type="entry name" value="NCEC7"/>
</dbReference>
<dbReference type="RefSeq" id="NP_417004.1">
    <property type="nucleotide sequence ID" value="NC_000913.3"/>
</dbReference>
<dbReference type="RefSeq" id="WP_000937912.1">
    <property type="nucleotide sequence ID" value="NZ_LN832404.1"/>
</dbReference>
<dbReference type="PDB" id="8TXR">
    <property type="method" value="EM"/>
    <property type="resolution" value="3.80 A"/>
    <property type="chains" value="A/B/C/D=1-456"/>
</dbReference>
<dbReference type="PDBsum" id="8TXR"/>
<dbReference type="EMDB" id="EMD-41704"/>
<dbReference type="SMR" id="P04994"/>
<dbReference type="BioGRID" id="4263222">
    <property type="interactions" value="94"/>
</dbReference>
<dbReference type="BioGRID" id="851327">
    <property type="interactions" value="1"/>
</dbReference>
<dbReference type="ComplexPortal" id="CPX-4005">
    <property type="entry name" value="Exodeoxyribonuclease VII complex"/>
</dbReference>
<dbReference type="DIP" id="DIP-11146N"/>
<dbReference type="FunCoup" id="P04994">
    <property type="interactions" value="460"/>
</dbReference>
<dbReference type="IntAct" id="P04994">
    <property type="interactions" value="9"/>
</dbReference>
<dbReference type="STRING" id="511145.b2509"/>
<dbReference type="jPOST" id="P04994"/>
<dbReference type="PaxDb" id="511145-b2509"/>
<dbReference type="DNASU" id="946988"/>
<dbReference type="EnsemblBacteria" id="AAC75562">
    <property type="protein sequence ID" value="AAC75562"/>
    <property type="gene ID" value="b2509"/>
</dbReference>
<dbReference type="GeneID" id="946988"/>
<dbReference type="KEGG" id="ecj:JW2493"/>
<dbReference type="KEGG" id="eco:b2509"/>
<dbReference type="KEGG" id="ecoc:C3026_13915"/>
<dbReference type="PATRIC" id="fig|1411691.4.peg.4227"/>
<dbReference type="EchoBASE" id="EB1065"/>
<dbReference type="eggNOG" id="COG1570">
    <property type="taxonomic scope" value="Bacteria"/>
</dbReference>
<dbReference type="HOGENOM" id="CLU_023625_3_1_6"/>
<dbReference type="InParanoid" id="P04994"/>
<dbReference type="OMA" id="WPAVRFE"/>
<dbReference type="OrthoDB" id="9802795at2"/>
<dbReference type="PhylomeDB" id="P04994"/>
<dbReference type="BioCyc" id="EcoCyc:EG11072-MONOMER"/>
<dbReference type="BioCyc" id="MetaCyc:EG11072-MONOMER"/>
<dbReference type="BRENDA" id="3.1.11.6">
    <property type="organism ID" value="2026"/>
</dbReference>
<dbReference type="PRO" id="PR:P04994"/>
<dbReference type="Proteomes" id="UP000000625">
    <property type="component" value="Chromosome"/>
</dbReference>
<dbReference type="GO" id="GO:0005737">
    <property type="term" value="C:cytoplasm"/>
    <property type="evidence" value="ECO:0007669"/>
    <property type="project" value="UniProtKB-SubCell"/>
</dbReference>
<dbReference type="GO" id="GO:0009318">
    <property type="term" value="C:exodeoxyribonuclease VII complex"/>
    <property type="evidence" value="ECO:0000353"/>
    <property type="project" value="ComplexPortal"/>
</dbReference>
<dbReference type="GO" id="GO:0003677">
    <property type="term" value="F:DNA binding"/>
    <property type="evidence" value="ECO:0007669"/>
    <property type="project" value="UniProtKB-KW"/>
</dbReference>
<dbReference type="GO" id="GO:0008855">
    <property type="term" value="F:exodeoxyribonuclease VII activity"/>
    <property type="evidence" value="ECO:0007669"/>
    <property type="project" value="UniProtKB-UniRule"/>
</dbReference>
<dbReference type="GO" id="GO:0006308">
    <property type="term" value="P:DNA catabolic process"/>
    <property type="evidence" value="ECO:0000314"/>
    <property type="project" value="ComplexPortal"/>
</dbReference>
<dbReference type="GO" id="GO:0006298">
    <property type="term" value="P:mismatch repair"/>
    <property type="evidence" value="ECO:0000314"/>
    <property type="project" value="ComplexPortal"/>
</dbReference>
<dbReference type="CDD" id="cd04489">
    <property type="entry name" value="ExoVII_LU_OBF"/>
    <property type="match status" value="1"/>
</dbReference>
<dbReference type="HAMAP" id="MF_00378">
    <property type="entry name" value="Exonuc_7_L"/>
    <property type="match status" value="1"/>
</dbReference>
<dbReference type="InterPro" id="IPR003753">
    <property type="entry name" value="Exonuc_VII_L"/>
</dbReference>
<dbReference type="InterPro" id="IPR020579">
    <property type="entry name" value="Exonuc_VII_lsu_C"/>
</dbReference>
<dbReference type="InterPro" id="IPR025824">
    <property type="entry name" value="OB-fold_nuc-bd_dom"/>
</dbReference>
<dbReference type="NCBIfam" id="TIGR00237">
    <property type="entry name" value="xseA"/>
    <property type="match status" value="1"/>
</dbReference>
<dbReference type="PANTHER" id="PTHR30008">
    <property type="entry name" value="EXODEOXYRIBONUCLEASE 7 LARGE SUBUNIT"/>
    <property type="match status" value="1"/>
</dbReference>
<dbReference type="PANTHER" id="PTHR30008:SF0">
    <property type="entry name" value="EXODEOXYRIBONUCLEASE 7 LARGE SUBUNIT"/>
    <property type="match status" value="1"/>
</dbReference>
<dbReference type="Pfam" id="PF02601">
    <property type="entry name" value="Exonuc_VII_L"/>
    <property type="match status" value="1"/>
</dbReference>
<dbReference type="Pfam" id="PF13742">
    <property type="entry name" value="tRNA_anti_2"/>
    <property type="match status" value="1"/>
</dbReference>
<proteinExistence type="evidence at protein level"/>